<gene>
    <name type="ordered locus">DvMF_2120</name>
</gene>
<reference key="1">
    <citation type="submission" date="2008-10" db="EMBL/GenBank/DDBJ databases">
        <title>Complete sequence of Desulfovibrio vulgaris str. 'Miyazaki F'.</title>
        <authorList>
            <person name="Lucas S."/>
            <person name="Copeland A."/>
            <person name="Lapidus A."/>
            <person name="Glavina del Rio T."/>
            <person name="Dalin E."/>
            <person name="Tice H."/>
            <person name="Bruce D."/>
            <person name="Goodwin L."/>
            <person name="Pitluck S."/>
            <person name="Sims D."/>
            <person name="Brettin T."/>
            <person name="Detter J.C."/>
            <person name="Han C."/>
            <person name="Larimer F."/>
            <person name="Land M."/>
            <person name="Hauser L."/>
            <person name="Kyrpides N."/>
            <person name="Mikhailova N."/>
            <person name="Hazen T.C."/>
            <person name="Richardson P."/>
        </authorList>
    </citation>
    <scope>NUCLEOTIDE SEQUENCE [LARGE SCALE GENOMIC DNA]</scope>
    <source>
        <strain>DSM 19637 / Miyazaki F</strain>
    </source>
</reference>
<reference key="2">
    <citation type="journal article" date="1988" name="J. Biochem.">
        <title>Amino acid sequence of ferredoxin I from Desulfovibrio vulgaris Miyazaki.</title>
        <authorList>
            <person name="Okawara N."/>
            <person name="Ogata M."/>
            <person name="Yagi T."/>
            <person name="Wakabayashi S."/>
            <person name="Matsubara H."/>
        </authorList>
    </citation>
    <scope>PROTEIN SEQUENCE OF 2-62</scope>
</reference>
<reference key="3">
    <citation type="journal article" date="1988" name="J. Biochem.">
        <title>Purification and characterization of ferredoxin from Desulfovibrio vulgaris Miyazaki.</title>
        <authorList>
            <person name="Ogata M."/>
            <person name="Kondo S."/>
            <person name="Okawara N."/>
            <person name="Yagi T."/>
        </authorList>
    </citation>
    <scope>FUNCTION</scope>
    <scope>SUBUNIT</scope>
</reference>
<sequence>MGWTVTVDTDKCTGDGECVDVCPVEVYELQDGKAVPVNEEECLGCESCVEVCEAGAITVEEN</sequence>
<proteinExistence type="evidence at protein level"/>
<dbReference type="EMBL" id="CP001197">
    <property type="protein sequence ID" value="ACL09063.1"/>
    <property type="molecule type" value="Genomic_DNA"/>
</dbReference>
<dbReference type="PIR" id="A30024">
    <property type="entry name" value="A30024"/>
</dbReference>
<dbReference type="SMR" id="P08813"/>
<dbReference type="STRING" id="883.DvMF_2120"/>
<dbReference type="KEGG" id="dvm:DvMF_2120"/>
<dbReference type="eggNOG" id="COG4231">
    <property type="taxonomic scope" value="Bacteria"/>
</dbReference>
<dbReference type="HOGENOM" id="CLU_139698_5_5_7"/>
<dbReference type="OrthoDB" id="9807879at2"/>
<dbReference type="GO" id="GO:0051538">
    <property type="term" value="F:3 iron, 4 sulfur cluster binding"/>
    <property type="evidence" value="ECO:0007669"/>
    <property type="project" value="UniProtKB-KW"/>
</dbReference>
<dbReference type="GO" id="GO:0051539">
    <property type="term" value="F:4 iron, 4 sulfur cluster binding"/>
    <property type="evidence" value="ECO:0007669"/>
    <property type="project" value="UniProtKB-KW"/>
</dbReference>
<dbReference type="GO" id="GO:0046872">
    <property type="term" value="F:metal ion binding"/>
    <property type="evidence" value="ECO:0007669"/>
    <property type="project" value="UniProtKB-KW"/>
</dbReference>
<dbReference type="Gene3D" id="3.30.70.20">
    <property type="match status" value="1"/>
</dbReference>
<dbReference type="InterPro" id="IPR017896">
    <property type="entry name" value="4Fe4S_Fe-S-bd"/>
</dbReference>
<dbReference type="InterPro" id="IPR017900">
    <property type="entry name" value="4Fe4S_Fe_S_CS"/>
</dbReference>
<dbReference type="InterPro" id="IPR050572">
    <property type="entry name" value="Fe-S_Ferredoxin"/>
</dbReference>
<dbReference type="PANTHER" id="PTHR43687">
    <property type="entry name" value="ADENYLYLSULFATE REDUCTASE, BETA SUBUNIT"/>
    <property type="match status" value="1"/>
</dbReference>
<dbReference type="PANTHER" id="PTHR43687:SF6">
    <property type="entry name" value="L-ASPARTATE SEMIALDEHYDE SULFURTRANSFERASE IRON-SULFUR SUBUNIT"/>
    <property type="match status" value="1"/>
</dbReference>
<dbReference type="Pfam" id="PF13237">
    <property type="entry name" value="Fer4_10"/>
    <property type="match status" value="1"/>
</dbReference>
<dbReference type="SUPFAM" id="SSF54862">
    <property type="entry name" value="4Fe-4S ferredoxins"/>
    <property type="match status" value="1"/>
</dbReference>
<dbReference type="PROSITE" id="PS00198">
    <property type="entry name" value="4FE4S_FER_1"/>
    <property type="match status" value="1"/>
</dbReference>
<dbReference type="PROSITE" id="PS51379">
    <property type="entry name" value="4FE4S_FER_2"/>
    <property type="match status" value="2"/>
</dbReference>
<name>FER1_NITV9</name>
<comment type="function">
    <text evidence="4">Ferredoxins are iron-sulfur proteins that transfer electrons in a wide variety of metabolic reactions. This ferredoxin serves as a carrier for pyruvate dehydrogenase.</text>
</comment>
<comment type="cofactor">
    <cofactor evidence="1">
        <name>[3Fe-4S] cluster</name>
        <dbReference type="ChEBI" id="CHEBI:21137"/>
    </cofactor>
    <text evidence="1">Binds 1 [3Fe-4S] cluster.</text>
</comment>
<comment type="cofactor">
    <cofactor evidence="1">
        <name>[4Fe-4S] cluster</name>
        <dbReference type="ChEBI" id="CHEBI:49883"/>
    </cofactor>
    <text evidence="1">Binds 1 [4Fe-4S] cluster.</text>
</comment>
<comment type="subunit">
    <text evidence="4">Homodimer.</text>
</comment>
<evidence type="ECO:0000250" key="1">
    <source>
        <dbReference type="UniProtKB" id="P49949"/>
    </source>
</evidence>
<evidence type="ECO:0000255" key="2">
    <source>
        <dbReference type="PROSITE-ProRule" id="PRU00711"/>
    </source>
</evidence>
<evidence type="ECO:0000269" key="3">
    <source>
    </source>
</evidence>
<evidence type="ECO:0000269" key="4">
    <source>
    </source>
</evidence>
<evidence type="ECO:0000303" key="5">
    <source>
    </source>
</evidence>
<evidence type="ECO:0000305" key="6"/>
<keyword id="KW-0003">3Fe-4S</keyword>
<keyword id="KW-0004">4Fe-4S</keyword>
<keyword id="KW-0903">Direct protein sequencing</keyword>
<keyword id="KW-0249">Electron transport</keyword>
<keyword id="KW-0408">Iron</keyword>
<keyword id="KW-0411">Iron-sulfur</keyword>
<keyword id="KW-0479">Metal-binding</keyword>
<keyword id="KW-0677">Repeat</keyword>
<keyword id="KW-0813">Transport</keyword>
<feature type="initiator methionine" description="Removed" evidence="3">
    <location>
        <position position="1"/>
    </location>
</feature>
<feature type="chain" id="PRO_0000159159" description="Ferredoxin-1">
    <location>
        <begin position="2"/>
        <end position="62"/>
    </location>
</feature>
<feature type="domain" description="4Fe-4S ferredoxin-type 1" evidence="2">
    <location>
        <begin position="3"/>
        <end position="32"/>
    </location>
</feature>
<feature type="domain" description="4Fe-4S ferredoxin-type 2" evidence="2">
    <location>
        <begin position="33"/>
        <end position="62"/>
    </location>
</feature>
<feature type="binding site" evidence="1">
    <location>
        <position position="12"/>
    </location>
    <ligand>
        <name>[3Fe-4S] cluster</name>
        <dbReference type="ChEBI" id="CHEBI:21137"/>
    </ligand>
</feature>
<feature type="binding site" evidence="1">
    <location>
        <position position="18"/>
    </location>
    <ligand>
        <name>[3Fe-4S] cluster</name>
        <dbReference type="ChEBI" id="CHEBI:21137"/>
    </ligand>
</feature>
<feature type="binding site" evidence="1">
    <location>
        <position position="22"/>
    </location>
    <ligand>
        <name>[4Fe-4S] cluster</name>
        <dbReference type="ChEBI" id="CHEBI:49883"/>
    </ligand>
</feature>
<feature type="binding site" evidence="1">
    <location>
        <position position="42"/>
    </location>
    <ligand>
        <name>[4Fe-4S] cluster</name>
        <dbReference type="ChEBI" id="CHEBI:49883"/>
    </ligand>
</feature>
<feature type="binding site" evidence="1">
    <location>
        <position position="45"/>
    </location>
    <ligand>
        <name>[4Fe-4S] cluster</name>
        <dbReference type="ChEBI" id="CHEBI:49883"/>
    </ligand>
</feature>
<feature type="binding site" evidence="1">
    <location>
        <position position="48"/>
    </location>
    <ligand>
        <name>[4Fe-4S] cluster</name>
        <dbReference type="ChEBI" id="CHEBI:49883"/>
    </ligand>
</feature>
<feature type="binding site" evidence="1">
    <location>
        <position position="52"/>
    </location>
    <ligand>
        <name>[3Fe-4S] cluster</name>
        <dbReference type="ChEBI" id="CHEBI:21137"/>
    </ligand>
</feature>
<feature type="sequence conflict" description="In Ref. 2; AA sequence." evidence="6" ref="2">
    <original>N</original>
    <variation>D</variation>
    <location>
        <position position="38"/>
    </location>
</feature>
<accession>P08813</accession>
<accession>B8DQE4</accession>
<organism>
    <name type="scientific">Nitratidesulfovibrio vulgaris (strain DSM 19637 / Miyazaki F)</name>
    <name type="common">Desulfovibrio vulgaris</name>
    <dbReference type="NCBI Taxonomy" id="883"/>
    <lineage>
        <taxon>Bacteria</taxon>
        <taxon>Pseudomonadati</taxon>
        <taxon>Thermodesulfobacteriota</taxon>
        <taxon>Desulfovibrionia</taxon>
        <taxon>Desulfovibrionales</taxon>
        <taxon>Desulfovibrionaceae</taxon>
        <taxon>Nitratidesulfovibrio</taxon>
    </lineage>
</organism>
<protein>
    <recommendedName>
        <fullName>Ferredoxin-1</fullName>
    </recommendedName>
    <alternativeName>
        <fullName evidence="5">Ferredoxin I</fullName>
        <shortName evidence="5">Fd I</shortName>
    </alternativeName>
</protein>